<organism>
    <name type="scientific">Cereibacter sphaeroides (strain ATCC 17023 / DSM 158 / JCM 6121 / CCUG 31486 / LMG 2827 / NBRC 12203 / NCIMB 8253 / ATH 2.4.1.)</name>
    <name type="common">Rhodobacter sphaeroides</name>
    <dbReference type="NCBI Taxonomy" id="272943"/>
    <lineage>
        <taxon>Bacteria</taxon>
        <taxon>Pseudomonadati</taxon>
        <taxon>Pseudomonadota</taxon>
        <taxon>Alphaproteobacteria</taxon>
        <taxon>Rhodobacterales</taxon>
        <taxon>Paracoccaceae</taxon>
        <taxon>Cereibacter</taxon>
    </lineage>
</organism>
<protein>
    <recommendedName>
        <fullName>5-aminolevulinate synthase 2</fullName>
        <ecNumber>2.3.1.37</ecNumber>
    </recommendedName>
    <alternativeName>
        <fullName>5-aminolevulinic acid synthase</fullName>
    </alternativeName>
    <alternativeName>
        <fullName>Delta-ALA synthase</fullName>
    </alternativeName>
    <alternativeName>
        <fullName>Delta-aminolevulinate synthase</fullName>
    </alternativeName>
</protein>
<keyword id="KW-0012">Acyltransferase</keyword>
<keyword id="KW-0350">Heme biosynthesis</keyword>
<keyword id="KW-0663">Pyridoxal phosphate</keyword>
<keyword id="KW-1185">Reference proteome</keyword>
<keyword id="KW-0808">Transferase</keyword>
<proteinExistence type="inferred from homology"/>
<feature type="chain" id="PRO_0000163830" description="5-aminolevulinate synthase 2">
    <location>
        <begin position="1"/>
        <end position="407"/>
    </location>
</feature>
<feature type="active site" evidence="1">
    <location>
        <position position="248"/>
    </location>
</feature>
<feature type="binding site" evidence="1">
    <location>
        <position position="21"/>
    </location>
    <ligand>
        <name>substrate</name>
    </ligand>
</feature>
<feature type="binding site" evidence="1">
    <location>
        <position position="137"/>
    </location>
    <ligand>
        <name>substrate</name>
    </ligand>
</feature>
<feature type="binding site" description="in other chain" evidence="1">
    <location>
        <position position="189"/>
    </location>
    <ligand>
        <name>pyridoxal 5'-phosphate</name>
        <dbReference type="ChEBI" id="CHEBI:597326"/>
        <note>ligand shared between dimeric partners</note>
    </ligand>
</feature>
<feature type="binding site" description="in other chain" evidence="1">
    <location>
        <position position="217"/>
    </location>
    <ligand>
        <name>pyridoxal 5'-phosphate</name>
        <dbReference type="ChEBI" id="CHEBI:597326"/>
        <note>ligand shared between dimeric partners</note>
    </ligand>
</feature>
<feature type="binding site" description="in other chain" evidence="1">
    <location>
        <position position="245"/>
    </location>
    <ligand>
        <name>pyridoxal 5'-phosphate</name>
        <dbReference type="ChEBI" id="CHEBI:597326"/>
        <note>ligand shared between dimeric partners</note>
    </ligand>
</feature>
<feature type="binding site" evidence="1">
    <location>
        <position position="277"/>
    </location>
    <ligand>
        <name>pyridoxal 5'-phosphate</name>
        <dbReference type="ChEBI" id="CHEBI:597326"/>
        <note>ligand shared between dimeric partners</note>
    </ligand>
</feature>
<feature type="binding site" evidence="1">
    <location>
        <position position="278"/>
    </location>
    <ligand>
        <name>pyridoxal 5'-phosphate</name>
        <dbReference type="ChEBI" id="CHEBI:597326"/>
        <note>ligand shared between dimeric partners</note>
    </ligand>
</feature>
<feature type="binding site" evidence="1">
    <location>
        <position position="363"/>
    </location>
    <ligand>
        <name>substrate</name>
    </ligand>
</feature>
<feature type="modified residue" description="N6-(pyridoxal phosphate)lysine" evidence="1">
    <location>
        <position position="248"/>
    </location>
</feature>
<name>HEM0_CERS4</name>
<gene>
    <name type="primary">hemT</name>
    <name type="ordered locus">RHOS4_30750</name>
    <name type="ORF">RSP_3028</name>
</gene>
<reference key="1">
    <citation type="journal article" date="1993" name="J. Bacteriol.">
        <title>Expression of the Rhodobacter sphaeroides hemA and hemT genes, encoding two 5-aminolevulinic acid synthase isozymes.</title>
        <authorList>
            <person name="Neidle E.L."/>
            <person name="Kaplan S."/>
        </authorList>
    </citation>
    <scope>NUCLEOTIDE SEQUENCE [GENOMIC DNA]</scope>
</reference>
<reference key="2">
    <citation type="submission" date="2005-09" db="EMBL/GenBank/DDBJ databases">
        <title>Complete sequence of chromosome 2 of Rhodobacter sphaeroides 2.4.1.</title>
        <authorList>
            <person name="Copeland A."/>
            <person name="Lucas S."/>
            <person name="Lapidus A."/>
            <person name="Barry K."/>
            <person name="Detter J.C."/>
            <person name="Glavina T."/>
            <person name="Hammon N."/>
            <person name="Israni S."/>
            <person name="Pitluck S."/>
            <person name="Richardson P."/>
            <person name="Mackenzie C."/>
            <person name="Choudhary M."/>
            <person name="Larimer F."/>
            <person name="Hauser L.J."/>
            <person name="Land M."/>
            <person name="Donohue T.J."/>
            <person name="Kaplan S."/>
        </authorList>
    </citation>
    <scope>NUCLEOTIDE SEQUENCE [LARGE SCALE GENOMIC DNA]</scope>
    <source>
        <strain>ATCC 17023 / DSM 158 / JCM 6121 / CCUG 31486 / LMG 2827 / NBRC 12203 / NCIMB 8253 / ATH 2.4.1.</strain>
    </source>
</reference>
<accession>Q06965</accession>
<accession>Q3IXU1</accession>
<dbReference type="EC" id="2.3.1.37"/>
<dbReference type="EMBL" id="L07489">
    <property type="protein sequence ID" value="AAA26124.1"/>
    <property type="molecule type" value="Genomic_DNA"/>
</dbReference>
<dbReference type="EMBL" id="CP000144">
    <property type="protein sequence ID" value="ABA80643.1"/>
    <property type="molecule type" value="Genomic_DNA"/>
</dbReference>
<dbReference type="PIR" id="A49845">
    <property type="entry name" value="A49845"/>
</dbReference>
<dbReference type="RefSeq" id="WP_011338981.1">
    <property type="nucleotide sequence ID" value="NC_007494.2"/>
</dbReference>
<dbReference type="RefSeq" id="YP_354544.1">
    <property type="nucleotide sequence ID" value="NC_007494.2"/>
</dbReference>
<dbReference type="SMR" id="Q06965"/>
<dbReference type="STRING" id="272943.RSP_3028"/>
<dbReference type="EnsemblBacteria" id="ABA80643">
    <property type="protein sequence ID" value="ABA80643"/>
    <property type="gene ID" value="RSP_3028"/>
</dbReference>
<dbReference type="GeneID" id="3721613"/>
<dbReference type="KEGG" id="rsp:RSP_3028"/>
<dbReference type="PATRIC" id="fig|272943.9.peg.3445"/>
<dbReference type="eggNOG" id="COG0156">
    <property type="taxonomic scope" value="Bacteria"/>
</dbReference>
<dbReference type="OrthoDB" id="9807157at2"/>
<dbReference type="PhylomeDB" id="Q06965"/>
<dbReference type="BioCyc" id="MetaCyc:MONOMER-13234"/>
<dbReference type="UniPathway" id="UPA00251">
    <property type="reaction ID" value="UER00375"/>
</dbReference>
<dbReference type="Proteomes" id="UP000002703">
    <property type="component" value="Chromosome 2"/>
</dbReference>
<dbReference type="GO" id="GO:0003870">
    <property type="term" value="F:5-aminolevulinate synthase activity"/>
    <property type="evidence" value="ECO:0007669"/>
    <property type="project" value="UniProtKB-EC"/>
</dbReference>
<dbReference type="GO" id="GO:0030170">
    <property type="term" value="F:pyridoxal phosphate binding"/>
    <property type="evidence" value="ECO:0007669"/>
    <property type="project" value="InterPro"/>
</dbReference>
<dbReference type="GO" id="GO:0006782">
    <property type="term" value="P:protoporphyrinogen IX biosynthetic process"/>
    <property type="evidence" value="ECO:0007669"/>
    <property type="project" value="UniProtKB-UniPathway"/>
</dbReference>
<dbReference type="CDD" id="cd06454">
    <property type="entry name" value="KBL_like"/>
    <property type="match status" value="1"/>
</dbReference>
<dbReference type="FunFam" id="3.40.640.10:FF:000006">
    <property type="entry name" value="5-aminolevulinate synthase, mitochondrial"/>
    <property type="match status" value="1"/>
</dbReference>
<dbReference type="Gene3D" id="3.90.1150.10">
    <property type="entry name" value="Aspartate Aminotransferase, domain 1"/>
    <property type="match status" value="1"/>
</dbReference>
<dbReference type="Gene3D" id="3.40.640.10">
    <property type="entry name" value="Type I PLP-dependent aspartate aminotransferase-like (Major domain)"/>
    <property type="match status" value="1"/>
</dbReference>
<dbReference type="InterPro" id="IPR010961">
    <property type="entry name" value="4pyrrol_synth_NH2levulA_synth"/>
</dbReference>
<dbReference type="InterPro" id="IPR001917">
    <property type="entry name" value="Aminotrans_II_pyridoxalP_BS"/>
</dbReference>
<dbReference type="InterPro" id="IPR004839">
    <property type="entry name" value="Aminotransferase_I/II_large"/>
</dbReference>
<dbReference type="InterPro" id="IPR050087">
    <property type="entry name" value="AON_synthase_class-II"/>
</dbReference>
<dbReference type="InterPro" id="IPR015424">
    <property type="entry name" value="PyrdxlP-dep_Trfase"/>
</dbReference>
<dbReference type="InterPro" id="IPR015421">
    <property type="entry name" value="PyrdxlP-dep_Trfase_major"/>
</dbReference>
<dbReference type="InterPro" id="IPR015422">
    <property type="entry name" value="PyrdxlP-dep_Trfase_small"/>
</dbReference>
<dbReference type="NCBIfam" id="TIGR01821">
    <property type="entry name" value="5aminolev_synth"/>
    <property type="match status" value="1"/>
</dbReference>
<dbReference type="PANTHER" id="PTHR13693:SF102">
    <property type="entry name" value="2-AMINO-3-KETOBUTYRATE COENZYME A LIGASE, MITOCHONDRIAL"/>
    <property type="match status" value="1"/>
</dbReference>
<dbReference type="PANTHER" id="PTHR13693">
    <property type="entry name" value="CLASS II AMINOTRANSFERASE/8-AMINO-7-OXONONANOATE SYNTHASE"/>
    <property type="match status" value="1"/>
</dbReference>
<dbReference type="Pfam" id="PF00155">
    <property type="entry name" value="Aminotran_1_2"/>
    <property type="match status" value="1"/>
</dbReference>
<dbReference type="SUPFAM" id="SSF53383">
    <property type="entry name" value="PLP-dependent transferases"/>
    <property type="match status" value="1"/>
</dbReference>
<dbReference type="PROSITE" id="PS00599">
    <property type="entry name" value="AA_TRANSFER_CLASS_2"/>
    <property type="match status" value="1"/>
</dbReference>
<comment type="catalytic activity">
    <reaction>
        <text>succinyl-CoA + glycine + H(+) = 5-aminolevulinate + CO2 + CoA</text>
        <dbReference type="Rhea" id="RHEA:12921"/>
        <dbReference type="ChEBI" id="CHEBI:15378"/>
        <dbReference type="ChEBI" id="CHEBI:16526"/>
        <dbReference type="ChEBI" id="CHEBI:57287"/>
        <dbReference type="ChEBI" id="CHEBI:57292"/>
        <dbReference type="ChEBI" id="CHEBI:57305"/>
        <dbReference type="ChEBI" id="CHEBI:356416"/>
        <dbReference type="EC" id="2.3.1.37"/>
    </reaction>
</comment>
<comment type="cofactor">
    <cofactor evidence="1">
        <name>pyridoxal 5'-phosphate</name>
        <dbReference type="ChEBI" id="CHEBI:597326"/>
    </cofactor>
</comment>
<comment type="pathway">
    <text>Porphyrin-containing compound metabolism; protoporphyrin-IX biosynthesis; 5-aminolevulinate from glycine: step 1/1.</text>
</comment>
<comment type="subunit">
    <text evidence="1">Homodimer.</text>
</comment>
<comment type="similarity">
    <text evidence="2">Belongs to the class-II pyridoxal-phosphate-dependent aminotransferase family.</text>
</comment>
<comment type="caution">
    <text evidence="2">Expressed in the mutant strain HemA1 but expression in the wild-type strain has not been proven.</text>
</comment>
<sequence>MEFSQHFQKLIDDMRLDGRYRTFAELERIAGEFPTALWHGPDGQARRVTVWCSNDYLGMGQNAEVLAAMHRSIDLSGAGTGGTRNISGTNRQHVALEAELADLHGKESALIFTSGWISNLAALGTLGKILPECAIFSDALNHNSMIEGIRRSGAERFIFHHNDPVHLDRLLSSVDPARPKIVAFESVYSMDGDIAPIAEICDVAERHGALTYLDEVHAVGLYGPRGGGISDRDGLADRVTIIEGTLAKAFGVMGGYVSGPSLLMDVIRSMSDSFIFTTSICPHLAAGALAAVRHVKAHPDERRRQAENAVRLKVLLQKAGLPVLDTPSHILPVMVGEAHLCRSISEALLARHAIYVQPINYPTVARGQERFRLTPTPFHTTSHMEALVEALLAVGRDLGWAMSRRAA</sequence>
<evidence type="ECO:0000250" key="1">
    <source>
        <dbReference type="UniProtKB" id="P18079"/>
    </source>
</evidence>
<evidence type="ECO:0000305" key="2"/>